<keyword id="KW-0031">Aminopeptidase</keyword>
<keyword id="KW-0378">Hydrolase</keyword>
<keyword id="KW-0479">Metal-binding</keyword>
<keyword id="KW-0645">Protease</keyword>
<accession>Q5HEN6</accession>
<dbReference type="EC" id="3.4.11.18" evidence="1"/>
<dbReference type="EMBL" id="CP000046">
    <property type="protein sequence ID" value="AAW38387.1"/>
    <property type="molecule type" value="Genomic_DNA"/>
</dbReference>
<dbReference type="RefSeq" id="WP_000636142.1">
    <property type="nucleotide sequence ID" value="NZ_JBGOFO010000006.1"/>
</dbReference>
<dbReference type="SMR" id="Q5HEN6"/>
<dbReference type="ChEMBL" id="CHEMBL3337333"/>
<dbReference type="MEROPS" id="M24.036"/>
<dbReference type="KEGG" id="sac:SACOL1946"/>
<dbReference type="HOGENOM" id="CLU_015857_0_2_9"/>
<dbReference type="Proteomes" id="UP000000530">
    <property type="component" value="Chromosome"/>
</dbReference>
<dbReference type="GO" id="GO:0004239">
    <property type="term" value="F:initiator methionyl aminopeptidase activity"/>
    <property type="evidence" value="ECO:0007669"/>
    <property type="project" value="UniProtKB-UniRule"/>
</dbReference>
<dbReference type="GO" id="GO:0046872">
    <property type="term" value="F:metal ion binding"/>
    <property type="evidence" value="ECO:0007669"/>
    <property type="project" value="UniProtKB-UniRule"/>
</dbReference>
<dbReference type="GO" id="GO:0070006">
    <property type="term" value="F:metalloaminopeptidase activity"/>
    <property type="evidence" value="ECO:0007669"/>
    <property type="project" value="UniProtKB-UniRule"/>
</dbReference>
<dbReference type="GO" id="GO:0006508">
    <property type="term" value="P:proteolysis"/>
    <property type="evidence" value="ECO:0007669"/>
    <property type="project" value="UniProtKB-KW"/>
</dbReference>
<dbReference type="CDD" id="cd01086">
    <property type="entry name" value="MetAP1"/>
    <property type="match status" value="1"/>
</dbReference>
<dbReference type="Gene3D" id="3.90.230.10">
    <property type="entry name" value="Creatinase/methionine aminopeptidase superfamily"/>
    <property type="match status" value="1"/>
</dbReference>
<dbReference type="HAMAP" id="MF_01974">
    <property type="entry name" value="MetAP_1"/>
    <property type="match status" value="1"/>
</dbReference>
<dbReference type="InterPro" id="IPR036005">
    <property type="entry name" value="Creatinase/aminopeptidase-like"/>
</dbReference>
<dbReference type="InterPro" id="IPR000994">
    <property type="entry name" value="Pept_M24"/>
</dbReference>
<dbReference type="InterPro" id="IPR001714">
    <property type="entry name" value="Pept_M24_MAP"/>
</dbReference>
<dbReference type="InterPro" id="IPR002467">
    <property type="entry name" value="Pept_M24A_MAP1"/>
</dbReference>
<dbReference type="NCBIfam" id="TIGR00500">
    <property type="entry name" value="met_pdase_I"/>
    <property type="match status" value="1"/>
</dbReference>
<dbReference type="PANTHER" id="PTHR43330">
    <property type="entry name" value="METHIONINE AMINOPEPTIDASE"/>
    <property type="match status" value="1"/>
</dbReference>
<dbReference type="PANTHER" id="PTHR43330:SF13">
    <property type="entry name" value="METHIONINE AMINOPEPTIDASE 2"/>
    <property type="match status" value="1"/>
</dbReference>
<dbReference type="Pfam" id="PF00557">
    <property type="entry name" value="Peptidase_M24"/>
    <property type="match status" value="1"/>
</dbReference>
<dbReference type="PRINTS" id="PR00599">
    <property type="entry name" value="MAPEPTIDASE"/>
</dbReference>
<dbReference type="SUPFAM" id="SSF55920">
    <property type="entry name" value="Creatinase/aminopeptidase"/>
    <property type="match status" value="1"/>
</dbReference>
<reference key="1">
    <citation type="journal article" date="2005" name="J. Bacteriol.">
        <title>Insights on evolution of virulence and resistance from the complete genome analysis of an early methicillin-resistant Staphylococcus aureus strain and a biofilm-producing methicillin-resistant Staphylococcus epidermidis strain.</title>
        <authorList>
            <person name="Gill S.R."/>
            <person name="Fouts D.E."/>
            <person name="Archer G.L."/>
            <person name="Mongodin E.F."/>
            <person name="DeBoy R.T."/>
            <person name="Ravel J."/>
            <person name="Paulsen I.T."/>
            <person name="Kolonay J.F."/>
            <person name="Brinkac L.M."/>
            <person name="Beanan M.J."/>
            <person name="Dodson R.J."/>
            <person name="Daugherty S.C."/>
            <person name="Madupu R."/>
            <person name="Angiuoli S.V."/>
            <person name="Durkin A.S."/>
            <person name="Haft D.H."/>
            <person name="Vamathevan J.J."/>
            <person name="Khouri H."/>
            <person name="Utterback T.R."/>
            <person name="Lee C."/>
            <person name="Dimitrov G."/>
            <person name="Jiang L."/>
            <person name="Qin H."/>
            <person name="Weidman J."/>
            <person name="Tran K."/>
            <person name="Kang K.H."/>
            <person name="Hance I.R."/>
            <person name="Nelson K.E."/>
            <person name="Fraser C.M."/>
        </authorList>
    </citation>
    <scope>NUCLEOTIDE SEQUENCE [LARGE SCALE GENOMIC DNA]</scope>
    <source>
        <strain>COL</strain>
    </source>
</reference>
<sequence>MIVKTEEELQALKEIGYICAKVRNTMQAATKPGITTKELDNIAKELFEEYGAISAPIHDENFPGQTCISVNEEVAHGIPSKRVIREGDLVNIDVSALKNGYYADTGISFVVGESDDPMKQKVCDVATMAFENAIAKVKPGTKLSNIGKAVHNTARQNDLKVIKNLTGHGVGLSLHEAPAHVLNYFDPKDKTLLTEGMVLAIEPFISSNASFVTEGKNEWAFETSDKSFVAQIEHTVIVTKDGPILTTKIEEE</sequence>
<proteinExistence type="inferred from homology"/>
<organism>
    <name type="scientific">Staphylococcus aureus (strain COL)</name>
    <dbReference type="NCBI Taxonomy" id="93062"/>
    <lineage>
        <taxon>Bacteria</taxon>
        <taxon>Bacillati</taxon>
        <taxon>Bacillota</taxon>
        <taxon>Bacilli</taxon>
        <taxon>Bacillales</taxon>
        <taxon>Staphylococcaceae</taxon>
        <taxon>Staphylococcus</taxon>
    </lineage>
</organism>
<name>MAP1_STAAC</name>
<evidence type="ECO:0000255" key="1">
    <source>
        <dbReference type="HAMAP-Rule" id="MF_01974"/>
    </source>
</evidence>
<protein>
    <recommendedName>
        <fullName evidence="1">Methionine aminopeptidase</fullName>
        <shortName evidence="1">MAP</shortName>
        <shortName evidence="1">MetAP</shortName>
        <ecNumber evidence="1">3.4.11.18</ecNumber>
    </recommendedName>
    <alternativeName>
        <fullName evidence="1">Peptidase M</fullName>
    </alternativeName>
</protein>
<gene>
    <name evidence="1" type="primary">map</name>
    <name type="ordered locus">SACOL1946</name>
</gene>
<feature type="chain" id="PRO_0000148954" description="Methionine aminopeptidase">
    <location>
        <begin position="1"/>
        <end position="252"/>
    </location>
</feature>
<feature type="binding site" evidence="1">
    <location>
        <position position="76"/>
    </location>
    <ligand>
        <name>substrate</name>
    </ligand>
</feature>
<feature type="binding site" evidence="1">
    <location>
        <position position="93"/>
    </location>
    <ligand>
        <name>a divalent metal cation</name>
        <dbReference type="ChEBI" id="CHEBI:60240"/>
        <label>1</label>
    </ligand>
</feature>
<feature type="binding site" evidence="1">
    <location>
        <position position="104"/>
    </location>
    <ligand>
        <name>a divalent metal cation</name>
        <dbReference type="ChEBI" id="CHEBI:60240"/>
        <label>1</label>
    </ligand>
</feature>
<feature type="binding site" evidence="1">
    <location>
        <position position="104"/>
    </location>
    <ligand>
        <name>a divalent metal cation</name>
        <dbReference type="ChEBI" id="CHEBI:60240"/>
        <label>2</label>
        <note>catalytic</note>
    </ligand>
</feature>
<feature type="binding site" evidence="1">
    <location>
        <position position="168"/>
    </location>
    <ligand>
        <name>a divalent metal cation</name>
        <dbReference type="ChEBI" id="CHEBI:60240"/>
        <label>2</label>
        <note>catalytic</note>
    </ligand>
</feature>
<feature type="binding site" evidence="1">
    <location>
        <position position="175"/>
    </location>
    <ligand>
        <name>substrate</name>
    </ligand>
</feature>
<feature type="binding site" evidence="1">
    <location>
        <position position="202"/>
    </location>
    <ligand>
        <name>a divalent metal cation</name>
        <dbReference type="ChEBI" id="CHEBI:60240"/>
        <label>2</label>
        <note>catalytic</note>
    </ligand>
</feature>
<feature type="binding site" evidence="1">
    <location>
        <position position="233"/>
    </location>
    <ligand>
        <name>a divalent metal cation</name>
        <dbReference type="ChEBI" id="CHEBI:60240"/>
        <label>1</label>
    </ligand>
</feature>
<feature type="binding site" evidence="1">
    <location>
        <position position="233"/>
    </location>
    <ligand>
        <name>a divalent metal cation</name>
        <dbReference type="ChEBI" id="CHEBI:60240"/>
        <label>2</label>
        <note>catalytic</note>
    </ligand>
</feature>
<comment type="function">
    <text evidence="1">Removes the N-terminal methionine from nascent proteins. The N-terminal methionine is often cleaved when the second residue in the primary sequence is small and uncharged (Met-Ala-, Cys, Gly, Pro, Ser, Thr, or Val). Requires deformylation of the N(alpha)-formylated initiator methionine before it can be hydrolyzed.</text>
</comment>
<comment type="catalytic activity">
    <reaction evidence="1">
        <text>Release of N-terminal amino acids, preferentially methionine, from peptides and arylamides.</text>
        <dbReference type="EC" id="3.4.11.18"/>
    </reaction>
</comment>
<comment type="cofactor">
    <cofactor evidence="1">
        <name>Co(2+)</name>
        <dbReference type="ChEBI" id="CHEBI:48828"/>
    </cofactor>
    <cofactor evidence="1">
        <name>Zn(2+)</name>
        <dbReference type="ChEBI" id="CHEBI:29105"/>
    </cofactor>
    <cofactor evidence="1">
        <name>Mn(2+)</name>
        <dbReference type="ChEBI" id="CHEBI:29035"/>
    </cofactor>
    <cofactor evidence="1">
        <name>Fe(2+)</name>
        <dbReference type="ChEBI" id="CHEBI:29033"/>
    </cofactor>
    <text evidence="1">Binds 2 divalent metal cations per subunit. Has a high-affinity and a low affinity metal-binding site. The true nature of the physiological cofactor is under debate. The enzyme is active with cobalt, zinc, manganese or divalent iron ions. Most likely, methionine aminopeptidases function as mononuclear Fe(2+)-metalloproteases under physiological conditions, and the catalytically relevant metal-binding site has been assigned to the histidine-containing high-affinity site.</text>
</comment>
<comment type="subunit">
    <text evidence="1">Monomer.</text>
</comment>
<comment type="similarity">
    <text evidence="1">Belongs to the peptidase M24A family. Methionine aminopeptidase type 1 subfamily.</text>
</comment>